<gene>
    <name evidence="2" type="primary">guaB</name>
    <name type="ordered locus">SPy_2206</name>
    <name type="ordered locus">M5005_Spy1857</name>
</gene>
<feature type="initiator methionine" description="Removed" evidence="1">
    <location>
        <position position="1"/>
    </location>
</feature>
<feature type="chain" id="PRO_0000093715" description="Inosine-5'-monophosphate dehydrogenase">
    <location>
        <begin position="2"/>
        <end position="493"/>
    </location>
</feature>
<feature type="domain" description="CBS 1" evidence="2">
    <location>
        <begin position="97"/>
        <end position="155"/>
    </location>
</feature>
<feature type="domain" description="CBS 2" evidence="2">
    <location>
        <begin position="159"/>
        <end position="219"/>
    </location>
</feature>
<feature type="active site" description="Thioimidate intermediate" evidence="2">
    <location>
        <position position="310"/>
    </location>
</feature>
<feature type="active site" description="Proton acceptor" evidence="2">
    <location>
        <position position="406"/>
    </location>
</feature>
<feature type="binding site" evidence="2">
    <location>
        <position position="253"/>
    </location>
    <ligand>
        <name>NAD(+)</name>
        <dbReference type="ChEBI" id="CHEBI:57540"/>
    </ligand>
</feature>
<feature type="binding site" evidence="2">
    <location>
        <begin position="303"/>
        <end position="305"/>
    </location>
    <ligand>
        <name>NAD(+)</name>
        <dbReference type="ChEBI" id="CHEBI:57540"/>
    </ligand>
</feature>
<feature type="binding site" description="in other chain" evidence="2">
    <location>
        <position position="305"/>
    </location>
    <ligand>
        <name>K(+)</name>
        <dbReference type="ChEBI" id="CHEBI:29103"/>
        <note>ligand shared between two tetrameric partners</note>
    </ligand>
</feature>
<feature type="binding site" description="in other chain" evidence="2">
    <location>
        <position position="307"/>
    </location>
    <ligand>
        <name>K(+)</name>
        <dbReference type="ChEBI" id="CHEBI:29103"/>
        <note>ligand shared between two tetrameric partners</note>
    </ligand>
</feature>
<feature type="binding site" evidence="2">
    <location>
        <position position="308"/>
    </location>
    <ligand>
        <name>IMP</name>
        <dbReference type="ChEBI" id="CHEBI:58053"/>
    </ligand>
</feature>
<feature type="binding site" description="in other chain" evidence="2">
    <location>
        <position position="310"/>
    </location>
    <ligand>
        <name>K(+)</name>
        <dbReference type="ChEBI" id="CHEBI:29103"/>
        <note>ligand shared between two tetrameric partners</note>
    </ligand>
</feature>
<feature type="binding site" evidence="2">
    <location>
        <begin position="343"/>
        <end position="345"/>
    </location>
    <ligand>
        <name>IMP</name>
        <dbReference type="ChEBI" id="CHEBI:58053"/>
    </ligand>
</feature>
<feature type="binding site" evidence="2">
    <location>
        <begin position="366"/>
        <end position="367"/>
    </location>
    <ligand>
        <name>IMP</name>
        <dbReference type="ChEBI" id="CHEBI:58053"/>
    </ligand>
</feature>
<feature type="binding site" evidence="2">
    <location>
        <begin position="390"/>
        <end position="394"/>
    </location>
    <ligand>
        <name>IMP</name>
        <dbReference type="ChEBI" id="CHEBI:58053"/>
    </ligand>
</feature>
<feature type="binding site" evidence="2">
    <location>
        <position position="421"/>
    </location>
    <ligand>
        <name>IMP</name>
        <dbReference type="ChEBI" id="CHEBI:58053"/>
    </ligand>
</feature>
<feature type="binding site" evidence="2">
    <location>
        <position position="475"/>
    </location>
    <ligand>
        <name>K(+)</name>
        <dbReference type="ChEBI" id="CHEBI:29103"/>
        <note>ligand shared between two tetrameric partners</note>
    </ligand>
</feature>
<feature type="binding site" evidence="2">
    <location>
        <position position="476"/>
    </location>
    <ligand>
        <name>K(+)</name>
        <dbReference type="ChEBI" id="CHEBI:29103"/>
        <note>ligand shared between two tetrameric partners</note>
    </ligand>
</feature>
<feature type="binding site" evidence="2">
    <location>
        <position position="477"/>
    </location>
    <ligand>
        <name>K(+)</name>
        <dbReference type="ChEBI" id="CHEBI:29103"/>
        <note>ligand shared between two tetrameric partners</note>
    </ligand>
</feature>
<comment type="function">
    <text evidence="2">Catalyzes the conversion of inosine 5'-phosphate (IMP) to xanthosine 5'-phosphate (XMP), the first committed and rate-limiting step in the de novo synthesis of guanine nucleotides, and therefore plays an important role in the regulation of cell growth.</text>
</comment>
<comment type="catalytic activity">
    <reaction evidence="2">
        <text>IMP + NAD(+) + H2O = XMP + NADH + H(+)</text>
        <dbReference type="Rhea" id="RHEA:11708"/>
        <dbReference type="ChEBI" id="CHEBI:15377"/>
        <dbReference type="ChEBI" id="CHEBI:15378"/>
        <dbReference type="ChEBI" id="CHEBI:57464"/>
        <dbReference type="ChEBI" id="CHEBI:57540"/>
        <dbReference type="ChEBI" id="CHEBI:57945"/>
        <dbReference type="ChEBI" id="CHEBI:58053"/>
        <dbReference type="EC" id="1.1.1.205"/>
    </reaction>
</comment>
<comment type="cofactor">
    <cofactor evidence="2">
        <name>K(+)</name>
        <dbReference type="ChEBI" id="CHEBI:29103"/>
    </cofactor>
</comment>
<comment type="activity regulation">
    <text evidence="2">Mycophenolic acid (MPA) is a non-competitive inhibitor that prevents formation of the closed enzyme conformation by binding to the same site as the amobile flap. In contrast, mizoribine monophosphate (MZP) is a competitive inhibitor that induces the closed conformation. MPA is a potent inhibitor of mammalian IMPDHs but a poor inhibitor of the bacterial enzymes. MZP is a more potent inhibitor of bacterial IMPDH.</text>
</comment>
<comment type="pathway">
    <text evidence="2">Purine metabolism; XMP biosynthesis via de novo pathway; XMP from IMP: step 1/1.</text>
</comment>
<comment type="subunit">
    <text evidence="2">Homotetramer.</text>
</comment>
<comment type="similarity">
    <text evidence="2">Belongs to the IMPDH/GMPR family.</text>
</comment>
<organism>
    <name type="scientific">Streptococcus pyogenes serotype M1</name>
    <dbReference type="NCBI Taxonomy" id="301447"/>
    <lineage>
        <taxon>Bacteria</taxon>
        <taxon>Bacillati</taxon>
        <taxon>Bacillota</taxon>
        <taxon>Bacilli</taxon>
        <taxon>Lactobacillales</taxon>
        <taxon>Streptococcaceae</taxon>
        <taxon>Streptococcus</taxon>
    </lineage>
</organism>
<protein>
    <recommendedName>
        <fullName evidence="2">Inosine-5'-monophosphate dehydrogenase</fullName>
        <shortName evidence="2">IMP dehydrogenase</shortName>
        <shortName evidence="2">IMPD</shortName>
        <shortName evidence="2">IMPDH</shortName>
        <ecNumber evidence="2">1.1.1.205</ecNumber>
    </recommendedName>
</protein>
<reference key="1">
    <citation type="journal article" date="2001" name="Proc. Natl. Acad. Sci. U.S.A.">
        <title>Complete genome sequence of an M1 strain of Streptococcus pyogenes.</title>
        <authorList>
            <person name="Ferretti J.J."/>
            <person name="McShan W.M."/>
            <person name="Ajdic D.J."/>
            <person name="Savic D.J."/>
            <person name="Savic G."/>
            <person name="Lyon K."/>
            <person name="Primeaux C."/>
            <person name="Sezate S."/>
            <person name="Suvorov A.N."/>
            <person name="Kenton S."/>
            <person name="Lai H.S."/>
            <person name="Lin S.P."/>
            <person name="Qian Y."/>
            <person name="Jia H.G."/>
            <person name="Najar F.Z."/>
            <person name="Ren Q."/>
            <person name="Zhu H."/>
            <person name="Song L."/>
            <person name="White J."/>
            <person name="Yuan X."/>
            <person name="Clifton S.W."/>
            <person name="Roe B.A."/>
            <person name="McLaughlin R.E."/>
        </authorList>
    </citation>
    <scope>NUCLEOTIDE SEQUENCE [LARGE SCALE GENOMIC DNA]</scope>
    <source>
        <strain>ATCC 700294 / SF370 / Serotype M1</strain>
    </source>
</reference>
<reference key="2">
    <citation type="journal article" date="2005" name="J. Infect. Dis.">
        <title>Evolutionary origin and emergence of a highly successful clone of serotype M1 group A Streptococcus involved multiple horizontal gene transfer events.</title>
        <authorList>
            <person name="Sumby P."/>
            <person name="Porcella S.F."/>
            <person name="Madrigal A.G."/>
            <person name="Barbian K.D."/>
            <person name="Virtaneva K."/>
            <person name="Ricklefs S.M."/>
            <person name="Sturdevant D.E."/>
            <person name="Graham M.R."/>
            <person name="Vuopio-Varkila J."/>
            <person name="Hoe N.P."/>
            <person name="Musser J.M."/>
        </authorList>
    </citation>
    <scope>NUCLEOTIDE SEQUENCE [LARGE SCALE GENOMIC DNA]</scope>
    <source>
        <strain>ATCC BAA-947 / MGAS5005 / Serotype M1</strain>
    </source>
</reference>
<evidence type="ECO:0000250" key="1"/>
<evidence type="ECO:0000255" key="2">
    <source>
        <dbReference type="HAMAP-Rule" id="MF_01964"/>
    </source>
</evidence>
<name>IMDH_STRP1</name>
<proteinExistence type="inferred from homology"/>
<dbReference type="EC" id="1.1.1.205" evidence="2"/>
<dbReference type="EMBL" id="AE004092">
    <property type="protein sequence ID" value="AAK34834.1"/>
    <property type="molecule type" value="Genomic_DNA"/>
</dbReference>
<dbReference type="EMBL" id="CP000017">
    <property type="protein sequence ID" value="AAZ52475.1"/>
    <property type="molecule type" value="Genomic_DNA"/>
</dbReference>
<dbReference type="RefSeq" id="NP_270113.1">
    <property type="nucleotide sequence ID" value="NC_002737.2"/>
</dbReference>
<dbReference type="SMR" id="P0C0H7"/>
<dbReference type="PaxDb" id="1314-HKU360_01967"/>
<dbReference type="KEGG" id="spy:SPy_2206"/>
<dbReference type="KEGG" id="spz:M5005_Spy1857"/>
<dbReference type="PATRIC" id="fig|160490.10.peg.1911"/>
<dbReference type="HOGENOM" id="CLU_022552_1_0_9"/>
<dbReference type="OMA" id="MGYCGAK"/>
<dbReference type="UniPathway" id="UPA00601">
    <property type="reaction ID" value="UER00295"/>
</dbReference>
<dbReference type="Proteomes" id="UP000000750">
    <property type="component" value="Chromosome"/>
</dbReference>
<dbReference type="GO" id="GO:0003938">
    <property type="term" value="F:IMP dehydrogenase activity"/>
    <property type="evidence" value="ECO:0007669"/>
    <property type="project" value="UniProtKB-UniRule"/>
</dbReference>
<dbReference type="GO" id="GO:0046872">
    <property type="term" value="F:metal ion binding"/>
    <property type="evidence" value="ECO:0007669"/>
    <property type="project" value="UniProtKB-UniRule"/>
</dbReference>
<dbReference type="GO" id="GO:0000166">
    <property type="term" value="F:nucleotide binding"/>
    <property type="evidence" value="ECO:0007669"/>
    <property type="project" value="UniProtKB-UniRule"/>
</dbReference>
<dbReference type="GO" id="GO:0006177">
    <property type="term" value="P:GMP biosynthetic process"/>
    <property type="evidence" value="ECO:0007669"/>
    <property type="project" value="UniProtKB-UniRule"/>
</dbReference>
<dbReference type="GO" id="GO:0006183">
    <property type="term" value="P:GTP biosynthetic process"/>
    <property type="evidence" value="ECO:0007669"/>
    <property type="project" value="TreeGrafter"/>
</dbReference>
<dbReference type="CDD" id="cd04601">
    <property type="entry name" value="CBS_pair_IMPDH"/>
    <property type="match status" value="1"/>
</dbReference>
<dbReference type="CDD" id="cd00381">
    <property type="entry name" value="IMPDH"/>
    <property type="match status" value="1"/>
</dbReference>
<dbReference type="FunFam" id="3.20.20.70:FF:000003">
    <property type="entry name" value="GMP reductase"/>
    <property type="match status" value="1"/>
</dbReference>
<dbReference type="Gene3D" id="3.20.20.70">
    <property type="entry name" value="Aldolase class I"/>
    <property type="match status" value="1"/>
</dbReference>
<dbReference type="HAMAP" id="MF_01964">
    <property type="entry name" value="IMPDH"/>
    <property type="match status" value="1"/>
</dbReference>
<dbReference type="InterPro" id="IPR013785">
    <property type="entry name" value="Aldolase_TIM"/>
</dbReference>
<dbReference type="InterPro" id="IPR000644">
    <property type="entry name" value="CBS_dom"/>
</dbReference>
<dbReference type="InterPro" id="IPR046342">
    <property type="entry name" value="CBS_dom_sf"/>
</dbReference>
<dbReference type="InterPro" id="IPR005990">
    <property type="entry name" value="IMP_DH"/>
</dbReference>
<dbReference type="InterPro" id="IPR015875">
    <property type="entry name" value="IMP_DH/GMP_Rdtase_CS"/>
</dbReference>
<dbReference type="InterPro" id="IPR001093">
    <property type="entry name" value="IMP_DH_GMPRt"/>
</dbReference>
<dbReference type="NCBIfam" id="TIGR01302">
    <property type="entry name" value="IMP_dehydrog"/>
    <property type="match status" value="1"/>
</dbReference>
<dbReference type="PANTHER" id="PTHR11911:SF111">
    <property type="entry name" value="INOSINE-5'-MONOPHOSPHATE DEHYDROGENASE"/>
    <property type="match status" value="1"/>
</dbReference>
<dbReference type="PANTHER" id="PTHR11911">
    <property type="entry name" value="INOSINE-5-MONOPHOSPHATE DEHYDROGENASE RELATED"/>
    <property type="match status" value="1"/>
</dbReference>
<dbReference type="Pfam" id="PF00571">
    <property type="entry name" value="CBS"/>
    <property type="match status" value="2"/>
</dbReference>
<dbReference type="Pfam" id="PF00478">
    <property type="entry name" value="IMPDH"/>
    <property type="match status" value="1"/>
</dbReference>
<dbReference type="PIRSF" id="PIRSF000130">
    <property type="entry name" value="IMPDH"/>
    <property type="match status" value="1"/>
</dbReference>
<dbReference type="SMART" id="SM00116">
    <property type="entry name" value="CBS"/>
    <property type="match status" value="2"/>
</dbReference>
<dbReference type="SMART" id="SM01240">
    <property type="entry name" value="IMPDH"/>
    <property type="match status" value="1"/>
</dbReference>
<dbReference type="SUPFAM" id="SSF54631">
    <property type="entry name" value="CBS-domain pair"/>
    <property type="match status" value="1"/>
</dbReference>
<dbReference type="SUPFAM" id="SSF51412">
    <property type="entry name" value="Inosine monophosphate dehydrogenase (IMPDH)"/>
    <property type="match status" value="1"/>
</dbReference>
<dbReference type="PROSITE" id="PS51371">
    <property type="entry name" value="CBS"/>
    <property type="match status" value="2"/>
</dbReference>
<dbReference type="PROSITE" id="PS00487">
    <property type="entry name" value="IMP_DH_GMP_RED"/>
    <property type="match status" value="1"/>
</dbReference>
<sequence length="493" mass="52807">MSNWDTKFLKKGYTFDDVLLIPAESHVLPNEVDLKTKLADNLTLNIPIITAAMDTVTGSKMAIAIARAGGLGVIHKNMSITEQAEEVRKVKRSENGVIIDPFFLTPEHKVSEAEELMQRYRISGVPIVETLANRKLVGIITNRDMRFISDYNAPISEHMTSEHLVTAAVGTDLETAERILHEHRIEKLPLVDNSGRLSGLITIKDIEKVIEFPHAAKDEFGRLLVAAAVGVTSDTFERAEALFEAGADAIVIDTAHGHSAGVLRKIAEIRAHFPNRTLIAGNIATAEGARALYDAGVDVVKVGIGPGSICTTRVVAGVGVPQVTAIYDAAAVAREYGKTIIADGGIKYSGDIVKALAAGGNAVMLGSMFAGTDEAPGETEIYQGRKFKTYRGMGSIAAMKKGSSDRYFQGSVNEANKLVPEGIEGRVAYKGAASDIVFQMLGGIRSGMGYVGAGDIQELHENAQFVEMSGAGLIESHPHDVQITNEAPNYSVH</sequence>
<keyword id="KW-0129">CBS domain</keyword>
<keyword id="KW-0332">GMP biosynthesis</keyword>
<keyword id="KW-0479">Metal-binding</keyword>
<keyword id="KW-0520">NAD</keyword>
<keyword id="KW-0560">Oxidoreductase</keyword>
<keyword id="KW-0630">Potassium</keyword>
<keyword id="KW-0658">Purine biosynthesis</keyword>
<keyword id="KW-1185">Reference proteome</keyword>
<keyword id="KW-0677">Repeat</keyword>
<accession>P0C0H7</accession>
<accession>P50099</accession>
<accession>P68838</accession>
<accession>Q48W00</accession>